<gene>
    <name evidence="1" type="primary">hemH</name>
    <name type="ordered locus">Patl_3987</name>
</gene>
<proteinExistence type="inferred from homology"/>
<accession>Q15NQ1</accession>
<evidence type="ECO:0000255" key="1">
    <source>
        <dbReference type="HAMAP-Rule" id="MF_00323"/>
    </source>
</evidence>
<keyword id="KW-0963">Cytoplasm</keyword>
<keyword id="KW-0350">Heme biosynthesis</keyword>
<keyword id="KW-0408">Iron</keyword>
<keyword id="KW-0456">Lyase</keyword>
<keyword id="KW-0479">Metal-binding</keyword>
<keyword id="KW-0627">Porphyrin biosynthesis</keyword>
<comment type="function">
    <text evidence="1">Catalyzes the ferrous insertion into protoporphyrin IX.</text>
</comment>
<comment type="catalytic activity">
    <reaction evidence="1">
        <text>heme b + 2 H(+) = protoporphyrin IX + Fe(2+)</text>
        <dbReference type="Rhea" id="RHEA:22584"/>
        <dbReference type="ChEBI" id="CHEBI:15378"/>
        <dbReference type="ChEBI" id="CHEBI:29033"/>
        <dbReference type="ChEBI" id="CHEBI:57306"/>
        <dbReference type="ChEBI" id="CHEBI:60344"/>
        <dbReference type="EC" id="4.98.1.1"/>
    </reaction>
</comment>
<comment type="pathway">
    <text evidence="1">Porphyrin-containing compound metabolism; protoheme biosynthesis; protoheme from protoporphyrin-IX: step 1/1.</text>
</comment>
<comment type="subcellular location">
    <subcellularLocation>
        <location evidence="1">Cytoplasm</location>
    </subcellularLocation>
</comment>
<comment type="similarity">
    <text evidence="1">Belongs to the ferrochelatase family.</text>
</comment>
<reference key="1">
    <citation type="submission" date="2006-06" db="EMBL/GenBank/DDBJ databases">
        <title>Complete sequence of Pseudoalteromonas atlantica T6c.</title>
        <authorList>
            <consortium name="US DOE Joint Genome Institute"/>
            <person name="Copeland A."/>
            <person name="Lucas S."/>
            <person name="Lapidus A."/>
            <person name="Barry K."/>
            <person name="Detter J.C."/>
            <person name="Glavina del Rio T."/>
            <person name="Hammon N."/>
            <person name="Israni S."/>
            <person name="Dalin E."/>
            <person name="Tice H."/>
            <person name="Pitluck S."/>
            <person name="Saunders E."/>
            <person name="Brettin T."/>
            <person name="Bruce D."/>
            <person name="Han C."/>
            <person name="Tapia R."/>
            <person name="Gilna P."/>
            <person name="Schmutz J."/>
            <person name="Larimer F."/>
            <person name="Land M."/>
            <person name="Hauser L."/>
            <person name="Kyrpides N."/>
            <person name="Kim E."/>
            <person name="Karls A.C."/>
            <person name="Bartlett D."/>
            <person name="Higgins B.P."/>
            <person name="Richardson P."/>
        </authorList>
    </citation>
    <scope>NUCLEOTIDE SEQUENCE [LARGE SCALE GENOMIC DNA]</scope>
    <source>
        <strain>T6c / ATCC BAA-1087</strain>
    </source>
</reference>
<organism>
    <name type="scientific">Pseudoalteromonas atlantica (strain T6c / ATCC BAA-1087)</name>
    <dbReference type="NCBI Taxonomy" id="3042615"/>
    <lineage>
        <taxon>Bacteria</taxon>
        <taxon>Pseudomonadati</taxon>
        <taxon>Pseudomonadota</taxon>
        <taxon>Gammaproteobacteria</taxon>
        <taxon>Alteromonadales</taxon>
        <taxon>Alteromonadaceae</taxon>
        <taxon>Paraglaciecola</taxon>
    </lineage>
</organism>
<name>HEMH_PSEA6</name>
<feature type="chain" id="PRO_1000019343" description="Ferrochelatase">
    <location>
        <begin position="1"/>
        <end position="360"/>
    </location>
</feature>
<feature type="binding site" evidence="1">
    <location>
        <position position="210"/>
    </location>
    <ligand>
        <name>Fe cation</name>
        <dbReference type="ChEBI" id="CHEBI:24875"/>
    </ligand>
</feature>
<feature type="binding site" evidence="1">
    <location>
        <position position="291"/>
    </location>
    <ligand>
        <name>Fe cation</name>
        <dbReference type="ChEBI" id="CHEBI:24875"/>
    </ligand>
</feature>
<protein>
    <recommendedName>
        <fullName evidence="1">Ferrochelatase</fullName>
        <ecNumber evidence="1">4.98.1.1</ecNumber>
    </recommendedName>
    <alternativeName>
        <fullName evidence="1">Heme synthase</fullName>
    </alternativeName>
    <alternativeName>
        <fullName evidence="1">Protoheme ferro-lyase</fullName>
    </alternativeName>
</protein>
<sequence>MKYRSNETFTHKQADKIGVLITNLGTPEAPEKGALKRYLREFLSDTRVVEVPKLIWWMILNLVILNIRPKRSAHAYSTVWTDRGSPLMFHTQDQTNALATSMQQKYGDKVVVDFAMRYGSPSIESVTQNMLEKGVRQLLVLPLYPQYSGATNGSTFDALGEVLRKTRWIPDVRFISHYHDFTPYIDAVAGSITEHWATHGRADKLIFTYHGIPKRYLTAGDPYHCECYKTSRLVAEKLGLGKHEYMVTFQSRFGREEWLQPYTDHTLKSLPEQGVKSVQMICPGFSADCLETIEEIGIENRDYFLEAGGQRYEYIAALNAQPQHIAALESLIEKNLGGWECPDRNSQLSADLATAMGSDK</sequence>
<dbReference type="EC" id="4.98.1.1" evidence="1"/>
<dbReference type="EMBL" id="CP000388">
    <property type="protein sequence ID" value="ABG42487.1"/>
    <property type="molecule type" value="Genomic_DNA"/>
</dbReference>
<dbReference type="RefSeq" id="WP_011576688.1">
    <property type="nucleotide sequence ID" value="NC_008228.1"/>
</dbReference>
<dbReference type="SMR" id="Q15NQ1"/>
<dbReference type="STRING" id="342610.Patl_3987"/>
<dbReference type="KEGG" id="pat:Patl_3987"/>
<dbReference type="eggNOG" id="COG0276">
    <property type="taxonomic scope" value="Bacteria"/>
</dbReference>
<dbReference type="HOGENOM" id="CLU_018884_0_0_6"/>
<dbReference type="OrthoDB" id="9809741at2"/>
<dbReference type="UniPathway" id="UPA00252">
    <property type="reaction ID" value="UER00325"/>
</dbReference>
<dbReference type="Proteomes" id="UP000001981">
    <property type="component" value="Chromosome"/>
</dbReference>
<dbReference type="GO" id="GO:0005737">
    <property type="term" value="C:cytoplasm"/>
    <property type="evidence" value="ECO:0007669"/>
    <property type="project" value="UniProtKB-SubCell"/>
</dbReference>
<dbReference type="GO" id="GO:0004325">
    <property type="term" value="F:ferrochelatase activity"/>
    <property type="evidence" value="ECO:0007669"/>
    <property type="project" value="UniProtKB-UniRule"/>
</dbReference>
<dbReference type="GO" id="GO:0046872">
    <property type="term" value="F:metal ion binding"/>
    <property type="evidence" value="ECO:0007669"/>
    <property type="project" value="UniProtKB-KW"/>
</dbReference>
<dbReference type="GO" id="GO:0006783">
    <property type="term" value="P:heme biosynthetic process"/>
    <property type="evidence" value="ECO:0007669"/>
    <property type="project" value="UniProtKB-UniRule"/>
</dbReference>
<dbReference type="CDD" id="cd00419">
    <property type="entry name" value="Ferrochelatase_C"/>
    <property type="match status" value="1"/>
</dbReference>
<dbReference type="CDD" id="cd03411">
    <property type="entry name" value="Ferrochelatase_N"/>
    <property type="match status" value="1"/>
</dbReference>
<dbReference type="FunFam" id="3.40.50.1400:FF:000002">
    <property type="entry name" value="Ferrochelatase"/>
    <property type="match status" value="1"/>
</dbReference>
<dbReference type="Gene3D" id="3.40.50.1400">
    <property type="match status" value="2"/>
</dbReference>
<dbReference type="HAMAP" id="MF_00323">
    <property type="entry name" value="Ferrochelatase"/>
    <property type="match status" value="1"/>
</dbReference>
<dbReference type="InterPro" id="IPR001015">
    <property type="entry name" value="Ferrochelatase"/>
</dbReference>
<dbReference type="InterPro" id="IPR019772">
    <property type="entry name" value="Ferrochelatase_AS"/>
</dbReference>
<dbReference type="InterPro" id="IPR033644">
    <property type="entry name" value="Ferrochelatase_C"/>
</dbReference>
<dbReference type="InterPro" id="IPR033659">
    <property type="entry name" value="Ferrochelatase_N"/>
</dbReference>
<dbReference type="NCBIfam" id="TIGR00109">
    <property type="entry name" value="hemH"/>
    <property type="match status" value="1"/>
</dbReference>
<dbReference type="PANTHER" id="PTHR11108">
    <property type="entry name" value="FERROCHELATASE"/>
    <property type="match status" value="1"/>
</dbReference>
<dbReference type="PANTHER" id="PTHR11108:SF1">
    <property type="entry name" value="FERROCHELATASE, MITOCHONDRIAL"/>
    <property type="match status" value="1"/>
</dbReference>
<dbReference type="Pfam" id="PF00762">
    <property type="entry name" value="Ferrochelatase"/>
    <property type="match status" value="1"/>
</dbReference>
<dbReference type="SUPFAM" id="SSF53800">
    <property type="entry name" value="Chelatase"/>
    <property type="match status" value="1"/>
</dbReference>
<dbReference type="PROSITE" id="PS00534">
    <property type="entry name" value="FERROCHELATASE"/>
    <property type="match status" value="1"/>
</dbReference>